<evidence type="ECO:0000250" key="1"/>
<evidence type="ECO:0000255" key="2">
    <source>
        <dbReference type="HAMAP-Rule" id="MF_00318"/>
    </source>
</evidence>
<accession>P69951</accession>
<accession>P82479</accession>
<dbReference type="EC" id="4.2.1.11" evidence="2"/>
<dbReference type="EMBL" id="AE009949">
    <property type="protein sequence ID" value="AAL97462.1"/>
    <property type="molecule type" value="Genomic_DNA"/>
</dbReference>
<dbReference type="RefSeq" id="WP_002985288.1">
    <property type="nucleotide sequence ID" value="NC_003485.1"/>
</dbReference>
<dbReference type="SMR" id="P69951"/>
<dbReference type="GeneID" id="69901134"/>
<dbReference type="KEGG" id="spm:spyM18_0798"/>
<dbReference type="HOGENOM" id="CLU_031223_2_1_9"/>
<dbReference type="UniPathway" id="UPA00109">
    <property type="reaction ID" value="UER00187"/>
</dbReference>
<dbReference type="GO" id="GO:0009986">
    <property type="term" value="C:cell surface"/>
    <property type="evidence" value="ECO:0007669"/>
    <property type="project" value="UniProtKB-SubCell"/>
</dbReference>
<dbReference type="GO" id="GO:0005576">
    <property type="term" value="C:extracellular region"/>
    <property type="evidence" value="ECO:0007669"/>
    <property type="project" value="UniProtKB-SubCell"/>
</dbReference>
<dbReference type="GO" id="GO:0009274">
    <property type="term" value="C:peptidoglycan-based cell wall"/>
    <property type="evidence" value="ECO:0007669"/>
    <property type="project" value="UniProtKB-ARBA"/>
</dbReference>
<dbReference type="GO" id="GO:0000015">
    <property type="term" value="C:phosphopyruvate hydratase complex"/>
    <property type="evidence" value="ECO:0007669"/>
    <property type="project" value="InterPro"/>
</dbReference>
<dbReference type="GO" id="GO:0000287">
    <property type="term" value="F:magnesium ion binding"/>
    <property type="evidence" value="ECO:0007669"/>
    <property type="project" value="UniProtKB-UniRule"/>
</dbReference>
<dbReference type="GO" id="GO:0004634">
    <property type="term" value="F:phosphopyruvate hydratase activity"/>
    <property type="evidence" value="ECO:0007669"/>
    <property type="project" value="UniProtKB-UniRule"/>
</dbReference>
<dbReference type="GO" id="GO:0006096">
    <property type="term" value="P:glycolytic process"/>
    <property type="evidence" value="ECO:0007669"/>
    <property type="project" value="UniProtKB-UniRule"/>
</dbReference>
<dbReference type="CDD" id="cd03313">
    <property type="entry name" value="enolase"/>
    <property type="match status" value="1"/>
</dbReference>
<dbReference type="FunFam" id="3.20.20.120:FF:000001">
    <property type="entry name" value="Enolase"/>
    <property type="match status" value="1"/>
</dbReference>
<dbReference type="FunFam" id="3.30.390.10:FF:000001">
    <property type="entry name" value="Enolase"/>
    <property type="match status" value="1"/>
</dbReference>
<dbReference type="Gene3D" id="3.20.20.120">
    <property type="entry name" value="Enolase-like C-terminal domain"/>
    <property type="match status" value="1"/>
</dbReference>
<dbReference type="Gene3D" id="3.30.390.10">
    <property type="entry name" value="Enolase-like, N-terminal domain"/>
    <property type="match status" value="1"/>
</dbReference>
<dbReference type="HAMAP" id="MF_00318">
    <property type="entry name" value="Enolase"/>
    <property type="match status" value="1"/>
</dbReference>
<dbReference type="InterPro" id="IPR000941">
    <property type="entry name" value="Enolase"/>
</dbReference>
<dbReference type="InterPro" id="IPR036849">
    <property type="entry name" value="Enolase-like_C_sf"/>
</dbReference>
<dbReference type="InterPro" id="IPR029017">
    <property type="entry name" value="Enolase-like_N"/>
</dbReference>
<dbReference type="InterPro" id="IPR020810">
    <property type="entry name" value="Enolase_C"/>
</dbReference>
<dbReference type="InterPro" id="IPR020809">
    <property type="entry name" value="Enolase_CS"/>
</dbReference>
<dbReference type="InterPro" id="IPR020811">
    <property type="entry name" value="Enolase_N"/>
</dbReference>
<dbReference type="NCBIfam" id="TIGR01060">
    <property type="entry name" value="eno"/>
    <property type="match status" value="1"/>
</dbReference>
<dbReference type="PANTHER" id="PTHR11902">
    <property type="entry name" value="ENOLASE"/>
    <property type="match status" value="1"/>
</dbReference>
<dbReference type="PANTHER" id="PTHR11902:SF1">
    <property type="entry name" value="ENOLASE"/>
    <property type="match status" value="1"/>
</dbReference>
<dbReference type="Pfam" id="PF00113">
    <property type="entry name" value="Enolase_C"/>
    <property type="match status" value="1"/>
</dbReference>
<dbReference type="Pfam" id="PF03952">
    <property type="entry name" value="Enolase_N"/>
    <property type="match status" value="1"/>
</dbReference>
<dbReference type="PIRSF" id="PIRSF001400">
    <property type="entry name" value="Enolase"/>
    <property type="match status" value="1"/>
</dbReference>
<dbReference type="PRINTS" id="PR00148">
    <property type="entry name" value="ENOLASE"/>
</dbReference>
<dbReference type="SFLD" id="SFLDS00001">
    <property type="entry name" value="Enolase"/>
    <property type="match status" value="1"/>
</dbReference>
<dbReference type="SFLD" id="SFLDF00002">
    <property type="entry name" value="enolase"/>
    <property type="match status" value="1"/>
</dbReference>
<dbReference type="SMART" id="SM01192">
    <property type="entry name" value="Enolase_C"/>
    <property type="match status" value="1"/>
</dbReference>
<dbReference type="SMART" id="SM01193">
    <property type="entry name" value="Enolase_N"/>
    <property type="match status" value="1"/>
</dbReference>
<dbReference type="SUPFAM" id="SSF51604">
    <property type="entry name" value="Enolase C-terminal domain-like"/>
    <property type="match status" value="1"/>
</dbReference>
<dbReference type="SUPFAM" id="SSF54826">
    <property type="entry name" value="Enolase N-terminal domain-like"/>
    <property type="match status" value="1"/>
</dbReference>
<dbReference type="PROSITE" id="PS00164">
    <property type="entry name" value="ENOLASE"/>
    <property type="match status" value="1"/>
</dbReference>
<sequence>MSIITDVYAREVLDSRGNPTLEVEVYTESGAFGRGMVPSGASTGEHEAVELRDGDKSRYLGLGTQKAVDNVNNIIAEAIIGYDVRDQQAIDRAMIALDGTPNKGKLGANAILGVSIAVARAAADYLEVPLYTYLGGFNTKVLPTPMMNIINGGSHSDAPIAFQEFMIMPVGAPTFKEGLRWGAEVFHALKKILKERGLVTAVGDEGGFAPKFEGTEDGVETILKAIEAAGYEAGENGIMIGFDCASSEFYDKERKVYDYTKFEGEGAAVRTSAEQVDYLEELVNKYPIITIEDGMDENDWDGWKVLTERLGKRVQLVGDDFFVTNTEYLARGIKENAANSILIKVNQIGTLTETFEAIEMAKEAGYTAVVSHRSGETEDSTIADIAVATNAGQIKTGSLSRTDRIAKYNQLLRIEDQLGEVAQYKGIKSFYNLKK</sequence>
<comment type="function">
    <text evidence="2">Catalyzes the reversible conversion of 2-phosphoglycerate (2-PG) into phosphoenolpyruvate (PEP). It is essential for the degradation of carbohydrates via glycolysis.</text>
</comment>
<comment type="catalytic activity">
    <reaction evidence="2">
        <text>(2R)-2-phosphoglycerate = phosphoenolpyruvate + H2O</text>
        <dbReference type="Rhea" id="RHEA:10164"/>
        <dbReference type="ChEBI" id="CHEBI:15377"/>
        <dbReference type="ChEBI" id="CHEBI:58289"/>
        <dbReference type="ChEBI" id="CHEBI:58702"/>
        <dbReference type="EC" id="4.2.1.11"/>
    </reaction>
</comment>
<comment type="cofactor">
    <cofactor evidence="2">
        <name>Mg(2+)</name>
        <dbReference type="ChEBI" id="CHEBI:18420"/>
    </cofactor>
    <text evidence="2">Binds a second Mg(2+) ion via substrate during catalysis.</text>
</comment>
<comment type="pathway">
    <text evidence="2">Carbohydrate degradation; glycolysis; pyruvate from D-glyceraldehyde 3-phosphate: step 4/5.</text>
</comment>
<comment type="subcellular location">
    <subcellularLocation>
        <location evidence="2">Cytoplasm</location>
    </subcellularLocation>
    <subcellularLocation>
        <location evidence="2">Secreted</location>
    </subcellularLocation>
    <subcellularLocation>
        <location evidence="2">Cell surface</location>
    </subcellularLocation>
    <text evidence="2">Fractions of enolase are present in both the cytoplasm and on the cell surface.</text>
</comment>
<comment type="similarity">
    <text evidence="2">Belongs to the enolase family.</text>
</comment>
<keyword id="KW-0963">Cytoplasm</keyword>
<keyword id="KW-0324">Glycolysis</keyword>
<keyword id="KW-0456">Lyase</keyword>
<keyword id="KW-0460">Magnesium</keyword>
<keyword id="KW-0479">Metal-binding</keyword>
<keyword id="KW-0964">Secreted</keyword>
<protein>
    <recommendedName>
        <fullName evidence="2">Enolase</fullName>
        <ecNumber evidence="2">4.2.1.11</ecNumber>
    </recommendedName>
    <alternativeName>
        <fullName evidence="2">2-phospho-D-glycerate hydro-lyase</fullName>
    </alternativeName>
    <alternativeName>
        <fullName evidence="2">2-phosphoglycerate dehydratase</fullName>
    </alternativeName>
</protein>
<reference key="1">
    <citation type="journal article" date="2002" name="Proc. Natl. Acad. Sci. U.S.A.">
        <title>Genome sequence and comparative microarray analysis of serotype M18 group A Streptococcus strains associated with acute rheumatic fever outbreaks.</title>
        <authorList>
            <person name="Smoot J.C."/>
            <person name="Barbian K.D."/>
            <person name="Van Gompel J.J."/>
            <person name="Smoot L.M."/>
            <person name="Chaussee M.S."/>
            <person name="Sylva G.L."/>
            <person name="Sturdevant D.E."/>
            <person name="Ricklefs S.M."/>
            <person name="Porcella S.F."/>
            <person name="Parkins L.D."/>
            <person name="Beres S.B."/>
            <person name="Campbell D.S."/>
            <person name="Smith T.M."/>
            <person name="Zhang Q."/>
            <person name="Kapur V."/>
            <person name="Daly J.A."/>
            <person name="Veasy L.G."/>
            <person name="Musser J.M."/>
        </authorList>
    </citation>
    <scope>NUCLEOTIDE SEQUENCE [LARGE SCALE GENOMIC DNA]</scope>
    <source>
        <strain>MGAS8232</strain>
    </source>
</reference>
<feature type="initiator methionine" description="Removed" evidence="1">
    <location>
        <position position="1"/>
    </location>
</feature>
<feature type="chain" id="PRO_0000133985" description="Enolase">
    <location>
        <begin position="2"/>
        <end position="435"/>
    </location>
</feature>
<feature type="active site" description="Proton donor" evidence="2">
    <location>
        <position position="205"/>
    </location>
</feature>
<feature type="active site" description="Proton acceptor" evidence="2">
    <location>
        <position position="344"/>
    </location>
</feature>
<feature type="binding site" evidence="2">
    <location>
        <position position="163"/>
    </location>
    <ligand>
        <name>(2R)-2-phosphoglycerate</name>
        <dbReference type="ChEBI" id="CHEBI:58289"/>
    </ligand>
</feature>
<feature type="binding site" evidence="2">
    <location>
        <position position="243"/>
    </location>
    <ligand>
        <name>Mg(2+)</name>
        <dbReference type="ChEBI" id="CHEBI:18420"/>
    </ligand>
</feature>
<feature type="binding site" evidence="2">
    <location>
        <position position="292"/>
    </location>
    <ligand>
        <name>Mg(2+)</name>
        <dbReference type="ChEBI" id="CHEBI:18420"/>
    </ligand>
</feature>
<feature type="binding site" evidence="2">
    <location>
        <position position="319"/>
    </location>
    <ligand>
        <name>Mg(2+)</name>
        <dbReference type="ChEBI" id="CHEBI:18420"/>
    </ligand>
</feature>
<feature type="binding site" evidence="2">
    <location>
        <position position="344"/>
    </location>
    <ligand>
        <name>(2R)-2-phosphoglycerate</name>
        <dbReference type="ChEBI" id="CHEBI:58289"/>
    </ligand>
</feature>
<feature type="binding site" evidence="2">
    <location>
        <position position="373"/>
    </location>
    <ligand>
        <name>(2R)-2-phosphoglycerate</name>
        <dbReference type="ChEBI" id="CHEBI:58289"/>
    </ligand>
</feature>
<feature type="binding site" evidence="2">
    <location>
        <position position="374"/>
    </location>
    <ligand>
        <name>(2R)-2-phosphoglycerate</name>
        <dbReference type="ChEBI" id="CHEBI:58289"/>
    </ligand>
</feature>
<feature type="binding site" evidence="2">
    <location>
        <position position="395"/>
    </location>
    <ligand>
        <name>(2R)-2-phosphoglycerate</name>
        <dbReference type="ChEBI" id="CHEBI:58289"/>
    </ligand>
</feature>
<proteinExistence type="inferred from homology"/>
<organism>
    <name type="scientific">Streptococcus pyogenes serotype M18 (strain MGAS8232)</name>
    <dbReference type="NCBI Taxonomy" id="186103"/>
    <lineage>
        <taxon>Bacteria</taxon>
        <taxon>Bacillati</taxon>
        <taxon>Bacillota</taxon>
        <taxon>Bacilli</taxon>
        <taxon>Lactobacillales</taxon>
        <taxon>Streptococcaceae</taxon>
        <taxon>Streptococcus</taxon>
    </lineage>
</organism>
<gene>
    <name evidence="2" type="primary">eno</name>
    <name type="ordered locus">spyM18_0798</name>
</gene>
<name>ENO_STRP8</name>